<organismHost>
    <name type="scientific">Homo sapiens</name>
    <name type="common">Human</name>
    <dbReference type="NCBI Taxonomy" id="9606"/>
</organismHost>
<reference key="1">
    <citation type="journal article" date="2004" name="J. Gen. Virol.">
        <title>Genetic content of wild-type human cytomegalovirus.</title>
        <authorList>
            <person name="Dolan A."/>
            <person name="Cunningham C."/>
            <person name="Hector R.D."/>
            <person name="Hassan-Walker A.F."/>
            <person name="Lee L."/>
            <person name="Addison C."/>
            <person name="Dargan D.J."/>
            <person name="McGeoch D.J."/>
            <person name="Gatherer D."/>
            <person name="Emery V.C."/>
            <person name="Griffiths P.D."/>
            <person name="Sinzger C."/>
            <person name="McSharry B.P."/>
            <person name="Wilkinson G.W.G."/>
            <person name="Davison A.J."/>
        </authorList>
    </citation>
    <scope>NUCLEOTIDE SEQUENCE [LARGE SCALE GENOMIC DNA]</scope>
</reference>
<sequence length="570" mass="63833">MANRRLRHAPHTATDEFHQALRRLFAPLCVHEDHFHVQLVIGRGALQPEEAAVETSQPPAQFAAQTSAVLQQQLVHHVPRSCVLHLFVTDKRFLNRELGDRLYQRFLREWLVCRQAEREAVTALFQRMVMTKPYFVFLAYVYSMDCLHTVAVRTMAFLRFERYDTDYLLRRLRLYPPERLHALLDGVTVSLLGDLHRFLFGVDLRLPVLHPTSSPCLALLRAKRFDARADLAVYHRNQWCHQRQPRSPQLRGLIAALRRHAGKVPCGNPLYVLARQAVQTFCDTCPRYLVPLRALGLHDETRGGGSTAAAAAVGHAGAGQQAHHVEPTKIVLFALSAALRGGLIGSVIDLPLWCLCRLKCERHLDARSLVAVVCRQCGHCLNLGKEKLHCQQNFPLNSMFYYRDRQEKSVIFNTHAELVHCSLCGSQRVVRQRVYELVSETLFGQRCVRVGWKAVLGLNAACAVYDHRLAFDVILPCAARTCDSTVVVRGVTVPRLLRLTSHGHGLLCARCQTGEYRDSCLESEDGAPLCRGCALVKQTACHVGGHIVQQARGGLAATSSSSSPHGLPHV</sequence>
<proteinExistence type="inferred from homology"/>
<gene>
    <name type="primary">UL49</name>
</gene>
<accession>Q6SW82</accession>
<accession>D2K3L7</accession>
<keyword id="KW-1185">Reference proteome</keyword>
<feature type="chain" id="PRO_0000418248" description="Protein UL49">
    <location>
        <begin position="1"/>
        <end position="570"/>
    </location>
</feature>
<protein>
    <recommendedName>
        <fullName>Protein UL49</fullName>
    </recommendedName>
</protein>
<organism>
    <name type="scientific">Human cytomegalovirus (strain Merlin)</name>
    <name type="common">HHV-5</name>
    <name type="synonym">Human herpesvirus 5</name>
    <dbReference type="NCBI Taxonomy" id="295027"/>
    <lineage>
        <taxon>Viruses</taxon>
        <taxon>Duplodnaviria</taxon>
        <taxon>Heunggongvirae</taxon>
        <taxon>Peploviricota</taxon>
        <taxon>Herviviricetes</taxon>
        <taxon>Herpesvirales</taxon>
        <taxon>Orthoherpesviridae</taxon>
        <taxon>Betaherpesvirinae</taxon>
        <taxon>Cytomegalovirus</taxon>
        <taxon>Cytomegalovirus humanbeta5</taxon>
        <taxon>Human cytomegalovirus</taxon>
    </lineage>
</organism>
<dbReference type="EMBL" id="AY446894">
    <property type="protein sequence ID" value="AAR31614.1"/>
    <property type="molecule type" value="Genomic_DNA"/>
</dbReference>
<dbReference type="RefSeq" id="YP_081508.1">
    <property type="nucleotide sequence ID" value="NC_006273.2"/>
</dbReference>
<dbReference type="DNASU" id="3077510"/>
<dbReference type="GeneID" id="3077510"/>
<dbReference type="KEGG" id="vg:3077510"/>
<dbReference type="Proteomes" id="UP000000938">
    <property type="component" value="Segment"/>
</dbReference>
<dbReference type="GO" id="GO:0019033">
    <property type="term" value="C:viral tegument"/>
    <property type="evidence" value="ECO:0007669"/>
    <property type="project" value="InterPro"/>
</dbReference>
<dbReference type="GO" id="GO:0016032">
    <property type="term" value="P:viral process"/>
    <property type="evidence" value="ECO:0007669"/>
    <property type="project" value="InterPro"/>
</dbReference>
<dbReference type="InterPro" id="IPR004339">
    <property type="entry name" value="UL49"/>
</dbReference>
<dbReference type="Pfam" id="PF03117">
    <property type="entry name" value="Herpes_UL49_1"/>
    <property type="match status" value="1"/>
</dbReference>
<evidence type="ECO:0000305" key="1"/>
<comment type="similarity">
    <text evidence="1">Belongs to the herpesviridae UL49 family.</text>
</comment>
<name>UL49_HCMVM</name>